<reference key="1">
    <citation type="journal article" date="2009" name="J. Bacteriol.">
        <title>The genome of Burkholderia cenocepacia J2315, an epidemic pathogen of cystic fibrosis patients.</title>
        <authorList>
            <person name="Holden M.T."/>
            <person name="Seth-Smith H.M."/>
            <person name="Crossman L.C."/>
            <person name="Sebaihia M."/>
            <person name="Bentley S.D."/>
            <person name="Cerdeno-Tarraga A.M."/>
            <person name="Thomson N.R."/>
            <person name="Bason N."/>
            <person name="Quail M.A."/>
            <person name="Sharp S."/>
            <person name="Cherevach I."/>
            <person name="Churcher C."/>
            <person name="Goodhead I."/>
            <person name="Hauser H."/>
            <person name="Holroyd N."/>
            <person name="Mungall K."/>
            <person name="Scott P."/>
            <person name="Walker D."/>
            <person name="White B."/>
            <person name="Rose H."/>
            <person name="Iversen P."/>
            <person name="Mil-Homens D."/>
            <person name="Rocha E.P."/>
            <person name="Fialho A.M."/>
            <person name="Baldwin A."/>
            <person name="Dowson C."/>
            <person name="Barrell B.G."/>
            <person name="Govan J.R."/>
            <person name="Vandamme P."/>
            <person name="Hart C.A."/>
            <person name="Mahenthiralingam E."/>
            <person name="Parkhill J."/>
        </authorList>
    </citation>
    <scope>NUCLEOTIDE SEQUENCE [LARGE SCALE GENOMIC DNA]</scope>
    <source>
        <strain>ATCC BAA-245 / DSM 16553 / LMG 16656 / NCTC 13227 / J2315 / CF5610</strain>
    </source>
</reference>
<feature type="chain" id="PRO_1000141670" description="DNA-directed RNA polymerase subunit beta">
    <location>
        <begin position="1"/>
        <end position="1368"/>
    </location>
</feature>
<dbReference type="EC" id="2.7.7.6" evidence="1"/>
<dbReference type="EMBL" id="AM747720">
    <property type="protein sequence ID" value="CAR50537.1"/>
    <property type="molecule type" value="Genomic_DNA"/>
</dbReference>
<dbReference type="RefSeq" id="WP_012492293.1">
    <property type="nucleotide sequence ID" value="NC_011000.1"/>
</dbReference>
<dbReference type="SMR" id="B4E5B2"/>
<dbReference type="KEGG" id="bcj:BCAL0226"/>
<dbReference type="eggNOG" id="COG0085">
    <property type="taxonomic scope" value="Bacteria"/>
</dbReference>
<dbReference type="HOGENOM" id="CLU_000524_4_0_4"/>
<dbReference type="BioCyc" id="BCEN216591:G1G1V-268-MONOMER"/>
<dbReference type="Proteomes" id="UP000001035">
    <property type="component" value="Chromosome 1"/>
</dbReference>
<dbReference type="GO" id="GO:0000428">
    <property type="term" value="C:DNA-directed RNA polymerase complex"/>
    <property type="evidence" value="ECO:0007669"/>
    <property type="project" value="UniProtKB-KW"/>
</dbReference>
<dbReference type="GO" id="GO:0003677">
    <property type="term" value="F:DNA binding"/>
    <property type="evidence" value="ECO:0007669"/>
    <property type="project" value="UniProtKB-UniRule"/>
</dbReference>
<dbReference type="GO" id="GO:0003899">
    <property type="term" value="F:DNA-directed RNA polymerase activity"/>
    <property type="evidence" value="ECO:0007669"/>
    <property type="project" value="UniProtKB-UniRule"/>
</dbReference>
<dbReference type="GO" id="GO:0032549">
    <property type="term" value="F:ribonucleoside binding"/>
    <property type="evidence" value="ECO:0007669"/>
    <property type="project" value="InterPro"/>
</dbReference>
<dbReference type="GO" id="GO:0006351">
    <property type="term" value="P:DNA-templated transcription"/>
    <property type="evidence" value="ECO:0007669"/>
    <property type="project" value="UniProtKB-UniRule"/>
</dbReference>
<dbReference type="CDD" id="cd00653">
    <property type="entry name" value="RNA_pol_B_RPB2"/>
    <property type="match status" value="1"/>
</dbReference>
<dbReference type="FunFam" id="2.40.50.100:FF:000006">
    <property type="entry name" value="DNA-directed RNA polymerase subunit beta"/>
    <property type="match status" value="1"/>
</dbReference>
<dbReference type="FunFam" id="2.40.50.150:FF:000001">
    <property type="entry name" value="DNA-directed RNA polymerase subunit beta"/>
    <property type="match status" value="1"/>
</dbReference>
<dbReference type="FunFam" id="3.90.1800.10:FF:000001">
    <property type="entry name" value="DNA-directed RNA polymerase subunit beta"/>
    <property type="match status" value="1"/>
</dbReference>
<dbReference type="Gene3D" id="2.40.50.100">
    <property type="match status" value="1"/>
</dbReference>
<dbReference type="Gene3D" id="2.40.50.150">
    <property type="match status" value="1"/>
</dbReference>
<dbReference type="Gene3D" id="3.90.1100.10">
    <property type="match status" value="2"/>
</dbReference>
<dbReference type="Gene3D" id="2.30.150.10">
    <property type="entry name" value="DNA-directed RNA polymerase, beta subunit, external 1 domain"/>
    <property type="match status" value="1"/>
</dbReference>
<dbReference type="Gene3D" id="2.40.270.10">
    <property type="entry name" value="DNA-directed RNA polymerase, subunit 2, domain 6"/>
    <property type="match status" value="1"/>
</dbReference>
<dbReference type="Gene3D" id="3.90.1800.10">
    <property type="entry name" value="RNA polymerase alpha subunit dimerisation domain"/>
    <property type="match status" value="1"/>
</dbReference>
<dbReference type="Gene3D" id="3.90.1110.10">
    <property type="entry name" value="RNA polymerase Rpb2, domain 2"/>
    <property type="match status" value="1"/>
</dbReference>
<dbReference type="HAMAP" id="MF_01321">
    <property type="entry name" value="RNApol_bact_RpoB"/>
    <property type="match status" value="1"/>
</dbReference>
<dbReference type="InterPro" id="IPR042107">
    <property type="entry name" value="DNA-dir_RNA_pol_bsu_ext_1_sf"/>
</dbReference>
<dbReference type="InterPro" id="IPR019462">
    <property type="entry name" value="DNA-dir_RNA_pol_bsu_external_1"/>
</dbReference>
<dbReference type="InterPro" id="IPR015712">
    <property type="entry name" value="DNA-dir_RNA_pol_su2"/>
</dbReference>
<dbReference type="InterPro" id="IPR007120">
    <property type="entry name" value="DNA-dir_RNAP_su2_dom"/>
</dbReference>
<dbReference type="InterPro" id="IPR037033">
    <property type="entry name" value="DNA-dir_RNAP_su2_hyb_sf"/>
</dbReference>
<dbReference type="InterPro" id="IPR010243">
    <property type="entry name" value="RNA_pol_bsu_bac"/>
</dbReference>
<dbReference type="InterPro" id="IPR007121">
    <property type="entry name" value="RNA_pol_bsu_CS"/>
</dbReference>
<dbReference type="InterPro" id="IPR007644">
    <property type="entry name" value="RNA_pol_bsu_protrusion"/>
</dbReference>
<dbReference type="InterPro" id="IPR007642">
    <property type="entry name" value="RNA_pol_Rpb2_2"/>
</dbReference>
<dbReference type="InterPro" id="IPR037034">
    <property type="entry name" value="RNA_pol_Rpb2_2_sf"/>
</dbReference>
<dbReference type="InterPro" id="IPR007645">
    <property type="entry name" value="RNA_pol_Rpb2_3"/>
</dbReference>
<dbReference type="InterPro" id="IPR007641">
    <property type="entry name" value="RNA_pol_Rpb2_7"/>
</dbReference>
<dbReference type="InterPro" id="IPR014724">
    <property type="entry name" value="RNA_pol_RPB2_OB-fold"/>
</dbReference>
<dbReference type="NCBIfam" id="NF001616">
    <property type="entry name" value="PRK00405.1"/>
    <property type="match status" value="1"/>
</dbReference>
<dbReference type="NCBIfam" id="TIGR02013">
    <property type="entry name" value="rpoB"/>
    <property type="match status" value="1"/>
</dbReference>
<dbReference type="PANTHER" id="PTHR20856">
    <property type="entry name" value="DNA-DIRECTED RNA POLYMERASE I SUBUNIT 2"/>
    <property type="match status" value="1"/>
</dbReference>
<dbReference type="Pfam" id="PF04563">
    <property type="entry name" value="RNA_pol_Rpb2_1"/>
    <property type="match status" value="1"/>
</dbReference>
<dbReference type="Pfam" id="PF04561">
    <property type="entry name" value="RNA_pol_Rpb2_2"/>
    <property type="match status" value="2"/>
</dbReference>
<dbReference type="Pfam" id="PF04565">
    <property type="entry name" value="RNA_pol_Rpb2_3"/>
    <property type="match status" value="1"/>
</dbReference>
<dbReference type="Pfam" id="PF10385">
    <property type="entry name" value="RNA_pol_Rpb2_45"/>
    <property type="match status" value="1"/>
</dbReference>
<dbReference type="Pfam" id="PF00562">
    <property type="entry name" value="RNA_pol_Rpb2_6"/>
    <property type="match status" value="1"/>
</dbReference>
<dbReference type="Pfam" id="PF04560">
    <property type="entry name" value="RNA_pol_Rpb2_7"/>
    <property type="match status" value="1"/>
</dbReference>
<dbReference type="SUPFAM" id="SSF64484">
    <property type="entry name" value="beta and beta-prime subunits of DNA dependent RNA-polymerase"/>
    <property type="match status" value="1"/>
</dbReference>
<dbReference type="PROSITE" id="PS01166">
    <property type="entry name" value="RNA_POL_BETA"/>
    <property type="match status" value="1"/>
</dbReference>
<protein>
    <recommendedName>
        <fullName evidence="1">DNA-directed RNA polymerase subunit beta</fullName>
        <shortName evidence="1">RNAP subunit beta</shortName>
        <ecNumber evidence="1">2.7.7.6</ecNumber>
    </recommendedName>
    <alternativeName>
        <fullName evidence="1">RNA polymerase subunit beta</fullName>
    </alternativeName>
    <alternativeName>
        <fullName evidence="1">Transcriptase subunit beta</fullName>
    </alternativeName>
</protein>
<sequence length="1368" mass="153242">MQYSFTEKKRIRKSFAKRPIVHQVPFLLATQLESFSTFLQADVPATQRKPEGLQAAFTSVFPIVSHNGFARLEFVSYALSSPAFNIKECQQRGLTYCSALRAKVRLVILDKESPNKPVVKEVKEQEVYMGEIPLMTPTGSFVINGTERVIVSQLHRSPGVFFEHDKGKTHSSGKLLFSARIIPYRGSWLDFEFDPKDILYFRVDRRRKMPVTILLKAIGLTPEQILANFFVFDNFTLMDEGAQLEFVPERLRGEVARFDITDRDGKVIVQKDKRINAKHIRDLEAAKTKFISVPEDYLLGRVLAKNVVDGDTGEVIASANDEVTESVLEKLREAGIKDIQTLYTNDLDQGPYISSTLRVDETTDKTAARIAIHRMMRPGEPPTEEAVEALFNRLFYSEEAYDLSKVGRMKFNRRVGRDEIVGPMTLQDDDILATIKILVELRNGKGEVDDIDHLGNRRVRCVGELAENQFRAGLVRVERAVKERLGQAESENLMPHDLINSKPISSAIREFFGSSQLSQFMDQTNPLSEITHKRRVSALGPGGLTRERAGFEVRDVHPTHYGRVCPIETPEGPNIGLINSLALYAHLNEYGFLETPYRKVVDSKVTDQIDYLSAIEEGRYMIAQANAAIDEDGRLIDELVSSREAGETMMVTPDRIQYMDVAPSQIVSVAASLIPFLEHDDANRALMGSNMQRQAVPCLRPEKPVVGTGIERTCAVDSGTTVQAFRGGVVDYVDAGRIVIRVNDDEAVAGEVGVDIYNLIKYTRSNQNTNINQRPIVKMGDKVSRGDVLADGASTDLGELALGQNMLIAFMPWNGYNFEDSILISEKVVADDRYTSIHIEELNVVARDTKLGPEEITRDISNLAEVQLGRLDESGIVYIGAEVEAGDVLVGKVTPKGETQLTPEEKLLRAIFGEKASDVKDTSLRVPSGMSGTVIDVQVFTREGIQRDKRAQQIIDDELKRYRLDLNDQLRIVEGDAFQRLARMLVGKVANGGPKKLAKGTKIDQAYLEDLDHYHWFDIRLADDEAAASLEAIKNSIEEKRHQFDLAFEEKRKKLTQGDELPPGVLKMVKVYLAVKRRLQPGDKMAGRHGNKGVVSKIVPIEDMPYMADGRPADVVLNPLGVPSRMNVGQVLEVHLGWAAKGLGWRIGEMLQRQAKIEELRTFLTKIYNESGRQEDLESFTDDEILELAKNLREGVPFATPVFDGATEEEMGKMLDLAFPDDIAEQLGMNPSKNQVRLYDGRTGEMFERRVTLGYMHYLKLHHLVDDKMHARSTGPYSLVTQQPLGGKAQFGGQRFGEMEVWALEAYGASYVLQEMLTVKSDDVTGRTKVYENLVKGDHVIDAGMPESFNVLVKEIRSLGIDIDLDRN</sequence>
<accession>B4E5B2</accession>
<keyword id="KW-0240">DNA-directed RNA polymerase</keyword>
<keyword id="KW-0548">Nucleotidyltransferase</keyword>
<keyword id="KW-0804">Transcription</keyword>
<keyword id="KW-0808">Transferase</keyword>
<gene>
    <name evidence="1" type="primary">rpoB</name>
    <name type="ordered locus">BceJ2315_02290</name>
    <name type="ORF">BCAL0226</name>
</gene>
<name>RPOB_BURCJ</name>
<comment type="function">
    <text evidence="1">DNA-dependent RNA polymerase catalyzes the transcription of DNA into RNA using the four ribonucleoside triphosphates as substrates.</text>
</comment>
<comment type="catalytic activity">
    <reaction evidence="1">
        <text>RNA(n) + a ribonucleoside 5'-triphosphate = RNA(n+1) + diphosphate</text>
        <dbReference type="Rhea" id="RHEA:21248"/>
        <dbReference type="Rhea" id="RHEA-COMP:14527"/>
        <dbReference type="Rhea" id="RHEA-COMP:17342"/>
        <dbReference type="ChEBI" id="CHEBI:33019"/>
        <dbReference type="ChEBI" id="CHEBI:61557"/>
        <dbReference type="ChEBI" id="CHEBI:140395"/>
        <dbReference type="EC" id="2.7.7.6"/>
    </reaction>
</comment>
<comment type="subunit">
    <text evidence="1">The RNAP catalytic core consists of 2 alpha, 1 beta, 1 beta' and 1 omega subunit. When a sigma factor is associated with the core the holoenzyme is formed, which can initiate transcription.</text>
</comment>
<comment type="similarity">
    <text evidence="1">Belongs to the RNA polymerase beta chain family.</text>
</comment>
<evidence type="ECO:0000255" key="1">
    <source>
        <dbReference type="HAMAP-Rule" id="MF_01321"/>
    </source>
</evidence>
<organism>
    <name type="scientific">Burkholderia cenocepacia (strain ATCC BAA-245 / DSM 16553 / LMG 16656 / NCTC 13227 / J2315 / CF5610)</name>
    <name type="common">Burkholderia cepacia (strain J2315)</name>
    <dbReference type="NCBI Taxonomy" id="216591"/>
    <lineage>
        <taxon>Bacteria</taxon>
        <taxon>Pseudomonadati</taxon>
        <taxon>Pseudomonadota</taxon>
        <taxon>Betaproteobacteria</taxon>
        <taxon>Burkholderiales</taxon>
        <taxon>Burkholderiaceae</taxon>
        <taxon>Burkholderia</taxon>
        <taxon>Burkholderia cepacia complex</taxon>
    </lineage>
</organism>
<proteinExistence type="inferred from homology"/>